<reference key="1">
    <citation type="journal article" date="2002" name="Nature">
        <title>Genome sequence of the plant pathogen Ralstonia solanacearum.</title>
        <authorList>
            <person name="Salanoubat M."/>
            <person name="Genin S."/>
            <person name="Artiguenave F."/>
            <person name="Gouzy J."/>
            <person name="Mangenot S."/>
            <person name="Arlat M."/>
            <person name="Billault A."/>
            <person name="Brottier P."/>
            <person name="Camus J.-C."/>
            <person name="Cattolico L."/>
            <person name="Chandler M."/>
            <person name="Choisne N."/>
            <person name="Claudel-Renard C."/>
            <person name="Cunnac S."/>
            <person name="Demange N."/>
            <person name="Gaspin C."/>
            <person name="Lavie M."/>
            <person name="Moisan A."/>
            <person name="Robert C."/>
            <person name="Saurin W."/>
            <person name="Schiex T."/>
            <person name="Siguier P."/>
            <person name="Thebault P."/>
            <person name="Whalen M."/>
            <person name="Wincker P."/>
            <person name="Levy M."/>
            <person name="Weissenbach J."/>
            <person name="Boucher C.A."/>
        </authorList>
    </citation>
    <scope>NUCLEOTIDE SEQUENCE [LARGE SCALE GENOMIC DNA]</scope>
    <source>
        <strain>ATCC BAA-1114 / GMI1000</strain>
    </source>
</reference>
<keyword id="KW-0227">DNA damage</keyword>
<keyword id="KW-0234">DNA repair</keyword>
<keyword id="KW-0238">DNA-binding</keyword>
<keyword id="KW-0326">Glycosidase</keyword>
<keyword id="KW-0378">Hydrolase</keyword>
<keyword id="KW-0456">Lyase</keyword>
<keyword id="KW-0479">Metal-binding</keyword>
<keyword id="KW-0511">Multifunctional enzyme</keyword>
<keyword id="KW-1185">Reference proteome</keyword>
<keyword id="KW-0862">Zinc</keyword>
<keyword id="KW-0863">Zinc-finger</keyword>
<organism>
    <name type="scientific">Ralstonia nicotianae (strain ATCC BAA-1114 / GMI1000)</name>
    <name type="common">Ralstonia solanacearum</name>
    <dbReference type="NCBI Taxonomy" id="267608"/>
    <lineage>
        <taxon>Bacteria</taxon>
        <taxon>Pseudomonadati</taxon>
        <taxon>Pseudomonadota</taxon>
        <taxon>Betaproteobacteria</taxon>
        <taxon>Burkholderiales</taxon>
        <taxon>Burkholderiaceae</taxon>
        <taxon>Ralstonia</taxon>
        <taxon>Ralstonia solanacearum species complex</taxon>
    </lineage>
</organism>
<accession>Q8Y2D7</accession>
<feature type="initiator methionine" description="Removed" evidence="1">
    <location>
        <position position="1"/>
    </location>
</feature>
<feature type="chain" id="PRO_0000170855" description="Formamidopyrimidine-DNA glycosylase">
    <location>
        <begin position="2"/>
        <end position="288"/>
    </location>
</feature>
<feature type="zinc finger region" description="FPG-type" evidence="2">
    <location>
        <begin position="254"/>
        <end position="288"/>
    </location>
</feature>
<feature type="active site" description="Schiff-base intermediate with DNA" evidence="2">
    <location>
        <position position="2"/>
    </location>
</feature>
<feature type="active site" description="Proton donor" evidence="2">
    <location>
        <position position="3"/>
    </location>
</feature>
<feature type="active site" description="Proton donor; for beta-elimination activity" evidence="2">
    <location>
        <position position="58"/>
    </location>
</feature>
<feature type="active site" description="Proton donor; for delta-elimination activity" evidence="2">
    <location>
        <position position="278"/>
    </location>
</feature>
<feature type="binding site" evidence="2">
    <location>
        <position position="101"/>
    </location>
    <ligand>
        <name>DNA</name>
        <dbReference type="ChEBI" id="CHEBI:16991"/>
    </ligand>
</feature>
<feature type="binding site" evidence="2">
    <location>
        <position position="124"/>
    </location>
    <ligand>
        <name>DNA</name>
        <dbReference type="ChEBI" id="CHEBI:16991"/>
    </ligand>
</feature>
<feature type="binding site" evidence="2">
    <location>
        <position position="169"/>
    </location>
    <ligand>
        <name>DNA</name>
        <dbReference type="ChEBI" id="CHEBI:16991"/>
    </ligand>
</feature>
<proteinExistence type="inferred from homology"/>
<dbReference type="EC" id="3.2.2.23" evidence="2"/>
<dbReference type="EC" id="4.2.99.18" evidence="2"/>
<dbReference type="EMBL" id="AL646052">
    <property type="protein sequence ID" value="CAD13927.1"/>
    <property type="molecule type" value="Genomic_DNA"/>
</dbReference>
<dbReference type="RefSeq" id="WP_011000361.1">
    <property type="nucleotide sequence ID" value="NC_003295.1"/>
</dbReference>
<dbReference type="SMR" id="Q8Y2D7"/>
<dbReference type="STRING" id="267608.RSc0399"/>
<dbReference type="EnsemblBacteria" id="CAD13927">
    <property type="protein sequence ID" value="CAD13927"/>
    <property type="gene ID" value="RSc0399"/>
</dbReference>
<dbReference type="KEGG" id="rso:RSc0399"/>
<dbReference type="eggNOG" id="COG0266">
    <property type="taxonomic scope" value="Bacteria"/>
</dbReference>
<dbReference type="HOGENOM" id="CLU_038423_1_1_4"/>
<dbReference type="Proteomes" id="UP000001436">
    <property type="component" value="Chromosome"/>
</dbReference>
<dbReference type="GO" id="GO:0034039">
    <property type="term" value="F:8-oxo-7,8-dihydroguanine DNA N-glycosylase activity"/>
    <property type="evidence" value="ECO:0007669"/>
    <property type="project" value="TreeGrafter"/>
</dbReference>
<dbReference type="GO" id="GO:0140078">
    <property type="term" value="F:class I DNA-(apurinic or apyrimidinic site) endonuclease activity"/>
    <property type="evidence" value="ECO:0007669"/>
    <property type="project" value="UniProtKB-EC"/>
</dbReference>
<dbReference type="GO" id="GO:0003684">
    <property type="term" value="F:damaged DNA binding"/>
    <property type="evidence" value="ECO:0007669"/>
    <property type="project" value="InterPro"/>
</dbReference>
<dbReference type="GO" id="GO:0008270">
    <property type="term" value="F:zinc ion binding"/>
    <property type="evidence" value="ECO:0007669"/>
    <property type="project" value="UniProtKB-UniRule"/>
</dbReference>
<dbReference type="GO" id="GO:0006284">
    <property type="term" value="P:base-excision repair"/>
    <property type="evidence" value="ECO:0007669"/>
    <property type="project" value="InterPro"/>
</dbReference>
<dbReference type="CDD" id="cd08966">
    <property type="entry name" value="EcFpg-like_N"/>
    <property type="match status" value="1"/>
</dbReference>
<dbReference type="FunFam" id="1.10.8.50:FF:000003">
    <property type="entry name" value="Formamidopyrimidine-DNA glycosylase"/>
    <property type="match status" value="1"/>
</dbReference>
<dbReference type="Gene3D" id="1.10.8.50">
    <property type="match status" value="1"/>
</dbReference>
<dbReference type="Gene3D" id="3.20.190.10">
    <property type="entry name" value="MutM-like, N-terminal"/>
    <property type="match status" value="1"/>
</dbReference>
<dbReference type="HAMAP" id="MF_00103">
    <property type="entry name" value="Fapy_DNA_glycosyl"/>
    <property type="match status" value="1"/>
</dbReference>
<dbReference type="InterPro" id="IPR015886">
    <property type="entry name" value="DNA_glyclase/AP_lyase_DNA-bd"/>
</dbReference>
<dbReference type="InterPro" id="IPR015887">
    <property type="entry name" value="DNA_glyclase_Znf_dom_DNA_BS"/>
</dbReference>
<dbReference type="InterPro" id="IPR020629">
    <property type="entry name" value="Formamido-pyr_DNA_Glyclase"/>
</dbReference>
<dbReference type="InterPro" id="IPR012319">
    <property type="entry name" value="FPG_cat"/>
</dbReference>
<dbReference type="InterPro" id="IPR035937">
    <property type="entry name" value="MutM-like_N-ter"/>
</dbReference>
<dbReference type="InterPro" id="IPR010979">
    <property type="entry name" value="Ribosomal_uS13-like_H2TH"/>
</dbReference>
<dbReference type="InterPro" id="IPR000214">
    <property type="entry name" value="Znf_DNA_glyclase/AP_lyase"/>
</dbReference>
<dbReference type="InterPro" id="IPR010663">
    <property type="entry name" value="Znf_FPG/IleRS"/>
</dbReference>
<dbReference type="NCBIfam" id="TIGR00577">
    <property type="entry name" value="fpg"/>
    <property type="match status" value="1"/>
</dbReference>
<dbReference type="NCBIfam" id="NF002211">
    <property type="entry name" value="PRK01103.1"/>
    <property type="match status" value="1"/>
</dbReference>
<dbReference type="PANTHER" id="PTHR22993">
    <property type="entry name" value="FORMAMIDOPYRIMIDINE-DNA GLYCOSYLASE"/>
    <property type="match status" value="1"/>
</dbReference>
<dbReference type="PANTHER" id="PTHR22993:SF9">
    <property type="entry name" value="FORMAMIDOPYRIMIDINE-DNA GLYCOSYLASE"/>
    <property type="match status" value="1"/>
</dbReference>
<dbReference type="Pfam" id="PF01149">
    <property type="entry name" value="Fapy_DNA_glyco"/>
    <property type="match status" value="1"/>
</dbReference>
<dbReference type="Pfam" id="PF06831">
    <property type="entry name" value="H2TH"/>
    <property type="match status" value="1"/>
</dbReference>
<dbReference type="Pfam" id="PF06827">
    <property type="entry name" value="zf-FPG_IleRS"/>
    <property type="match status" value="1"/>
</dbReference>
<dbReference type="SMART" id="SM00898">
    <property type="entry name" value="Fapy_DNA_glyco"/>
    <property type="match status" value="1"/>
</dbReference>
<dbReference type="SMART" id="SM01232">
    <property type="entry name" value="H2TH"/>
    <property type="match status" value="1"/>
</dbReference>
<dbReference type="SUPFAM" id="SSF57716">
    <property type="entry name" value="Glucocorticoid receptor-like (DNA-binding domain)"/>
    <property type="match status" value="1"/>
</dbReference>
<dbReference type="SUPFAM" id="SSF81624">
    <property type="entry name" value="N-terminal domain of MutM-like DNA repair proteins"/>
    <property type="match status" value="1"/>
</dbReference>
<dbReference type="SUPFAM" id="SSF46946">
    <property type="entry name" value="S13-like H2TH domain"/>
    <property type="match status" value="1"/>
</dbReference>
<dbReference type="PROSITE" id="PS51068">
    <property type="entry name" value="FPG_CAT"/>
    <property type="match status" value="1"/>
</dbReference>
<dbReference type="PROSITE" id="PS01242">
    <property type="entry name" value="ZF_FPG_1"/>
    <property type="match status" value="1"/>
</dbReference>
<dbReference type="PROSITE" id="PS51066">
    <property type="entry name" value="ZF_FPG_2"/>
    <property type="match status" value="1"/>
</dbReference>
<comment type="function">
    <text evidence="2">Involved in base excision repair of DNA damaged by oxidation or by mutagenic agents. Acts as a DNA glycosylase that recognizes and removes damaged bases. Has a preference for oxidized purines, such as 7,8-dihydro-8-oxoguanine (8-oxoG). Has AP (apurinic/apyrimidinic) lyase activity and introduces nicks in the DNA strand. Cleaves the DNA backbone by beta-delta elimination to generate a single-strand break at the site of the removed base with both 3'- and 5'-phosphates.</text>
</comment>
<comment type="catalytic activity">
    <reaction evidence="2">
        <text>Hydrolysis of DNA containing ring-opened 7-methylguanine residues, releasing 2,6-diamino-4-hydroxy-5-(N-methyl)formamidopyrimidine.</text>
        <dbReference type="EC" id="3.2.2.23"/>
    </reaction>
</comment>
<comment type="catalytic activity">
    <reaction evidence="2">
        <text>2'-deoxyribonucleotide-(2'-deoxyribose 5'-phosphate)-2'-deoxyribonucleotide-DNA = a 3'-end 2'-deoxyribonucleotide-(2,3-dehydro-2,3-deoxyribose 5'-phosphate)-DNA + a 5'-end 5'-phospho-2'-deoxyribonucleoside-DNA + H(+)</text>
        <dbReference type="Rhea" id="RHEA:66592"/>
        <dbReference type="Rhea" id="RHEA-COMP:13180"/>
        <dbReference type="Rhea" id="RHEA-COMP:16897"/>
        <dbReference type="Rhea" id="RHEA-COMP:17067"/>
        <dbReference type="ChEBI" id="CHEBI:15378"/>
        <dbReference type="ChEBI" id="CHEBI:136412"/>
        <dbReference type="ChEBI" id="CHEBI:157695"/>
        <dbReference type="ChEBI" id="CHEBI:167181"/>
        <dbReference type="EC" id="4.2.99.18"/>
    </reaction>
</comment>
<comment type="cofactor">
    <cofactor evidence="2">
        <name>Zn(2+)</name>
        <dbReference type="ChEBI" id="CHEBI:29105"/>
    </cofactor>
    <text evidence="2">Binds 1 zinc ion per subunit.</text>
</comment>
<comment type="subunit">
    <text evidence="2">Monomer.</text>
</comment>
<comment type="similarity">
    <text evidence="2">Belongs to the FPG family.</text>
</comment>
<name>FPG_RALN1</name>
<sequence length="288" mass="31389">MPELPEVEVTRLGLVPHLTGRRIVRAVVRHHGLRWPVDPALPELLGGRTVARVLRRGKYLLIECVPDIAHGPQAGAGWLLVHLGMTGTLRVLETPAAPGTHDHLDIELADAAGRPITLRYRDPRRFGAVLWHDGDEAALSAHPLLRNLGIEPFDTRFDGDWMYARTRGRSAAIKTVLLAGDIVVGVGNIYCSESLFRAGIRPTTAAGRISRPRYAALAEAIRATLADAIARGGSTLRDFVGSDGQSGYFQLDALVYDRAGLPCRVCGTPIRQIVQGQRSTFYCPACQR</sequence>
<gene>
    <name evidence="2" type="primary">mutM</name>
    <name evidence="2" type="synonym">fpg</name>
    <name type="ordered locus">RSc0399</name>
    <name type="ORF">RS03367</name>
</gene>
<protein>
    <recommendedName>
        <fullName evidence="2">Formamidopyrimidine-DNA glycosylase</fullName>
        <shortName evidence="2">Fapy-DNA glycosylase</shortName>
        <ecNumber evidence="2">3.2.2.23</ecNumber>
    </recommendedName>
    <alternativeName>
        <fullName evidence="2">DNA-(apurinic or apyrimidinic site) lyase MutM</fullName>
        <shortName evidence="2">AP lyase MutM</shortName>
        <ecNumber evidence="2">4.2.99.18</ecNumber>
    </alternativeName>
</protein>
<evidence type="ECO:0000250" key="1"/>
<evidence type="ECO:0000255" key="2">
    <source>
        <dbReference type="HAMAP-Rule" id="MF_00103"/>
    </source>
</evidence>